<feature type="chain" id="PRO_0000119351" description="V-type proton ATPase subunit d 1">
    <location>
        <begin position="1"/>
        <end position="351"/>
    </location>
</feature>
<feature type="modified residue" description="Phosphotyrosine" evidence="9">
    <location>
        <position position="270"/>
    </location>
</feature>
<feature type="modified residue" description="Phosphoserine" evidence="10">
    <location>
        <position position="283"/>
    </location>
</feature>
<feature type="sequence conflict" description="In Ref. 1; AAC83085." evidence="7" ref="1">
    <original>L</original>
    <variation>M</variation>
    <location>
        <position position="23"/>
    </location>
</feature>
<protein>
    <recommendedName>
        <fullName>V-type proton ATPase subunit d 1</fullName>
        <shortName>V-ATPase subunit d 1</shortName>
    </recommendedName>
    <alternativeName>
        <fullName>P39</fullName>
    </alternativeName>
    <alternativeName>
        <fullName>Physophilin</fullName>
    </alternativeName>
    <alternativeName>
        <fullName>V-ATPase 40 kDa accessory protein</fullName>
    </alternativeName>
    <alternativeName>
        <fullName>V-ATPase AC39 subunit</fullName>
    </alternativeName>
    <alternativeName>
        <fullName>Vacuolar proton pump subunit d 1</fullName>
    </alternativeName>
</protein>
<evidence type="ECO:0000250" key="1">
    <source>
        <dbReference type="UniProtKB" id="P61420"/>
    </source>
</evidence>
<evidence type="ECO:0000250" key="2">
    <source>
        <dbReference type="UniProtKB" id="P61421"/>
    </source>
</evidence>
<evidence type="ECO:0000250" key="3">
    <source>
        <dbReference type="UniProtKB" id="Q6PGV1"/>
    </source>
</evidence>
<evidence type="ECO:0000269" key="4">
    <source>
    </source>
</evidence>
<evidence type="ECO:0000269" key="5">
    <source>
    </source>
</evidence>
<evidence type="ECO:0000269" key="6">
    <source>
    </source>
</evidence>
<evidence type="ECO:0000305" key="7"/>
<evidence type="ECO:0000312" key="8">
    <source>
        <dbReference type="MGI" id="MGI:1201778"/>
    </source>
</evidence>
<evidence type="ECO:0007744" key="9">
    <source>
    </source>
</evidence>
<evidence type="ECO:0007744" key="10">
    <source>
    </source>
</evidence>
<name>VA0D1_MOUSE</name>
<keyword id="KW-0002">3D-structure</keyword>
<keyword id="KW-0970">Cilium biogenesis/degradation</keyword>
<keyword id="KW-0968">Cytoplasmic vesicle</keyword>
<keyword id="KW-0903">Direct protein sequencing</keyword>
<keyword id="KW-0375">Hydrogen ion transport</keyword>
<keyword id="KW-0406">Ion transport</keyword>
<keyword id="KW-0458">Lysosome</keyword>
<keyword id="KW-0472">Membrane</keyword>
<keyword id="KW-0597">Phosphoprotein</keyword>
<keyword id="KW-1185">Reference proteome</keyword>
<keyword id="KW-0813">Transport</keyword>
<dbReference type="EMBL" id="U13840">
    <property type="protein sequence ID" value="AAC83085.1"/>
    <property type="molecule type" value="mRNA"/>
</dbReference>
<dbReference type="EMBL" id="U21549">
    <property type="protein sequence ID" value="AAA92288.1"/>
    <property type="molecule type" value="mRNA"/>
</dbReference>
<dbReference type="EMBL" id="AB088408">
    <property type="protein sequence ID" value="BAC57954.1"/>
    <property type="molecule type" value="mRNA"/>
</dbReference>
<dbReference type="EMBL" id="AK083372">
    <property type="protein sequence ID" value="BAC38889.1"/>
    <property type="molecule type" value="mRNA"/>
</dbReference>
<dbReference type="EMBL" id="AK171515">
    <property type="protein sequence ID" value="BAE42500.1"/>
    <property type="molecule type" value="mRNA"/>
</dbReference>
<dbReference type="CCDS" id="CCDS22604.1"/>
<dbReference type="RefSeq" id="NP_038505.2">
    <property type="nucleotide sequence ID" value="NM_013477.3"/>
</dbReference>
<dbReference type="PDB" id="9BRA">
    <property type="method" value="EM"/>
    <property type="resolution" value="4.30 A"/>
    <property type="chains" value="d=1-351"/>
</dbReference>
<dbReference type="PDB" id="9BRQ">
    <property type="method" value="EM"/>
    <property type="resolution" value="4.30 A"/>
    <property type="chains" value="d=1-351"/>
</dbReference>
<dbReference type="PDB" id="9BRR">
    <property type="method" value="EM"/>
    <property type="resolution" value="4.50 A"/>
    <property type="chains" value="d=1-351"/>
</dbReference>
<dbReference type="PDB" id="9BRS">
    <property type="method" value="EM"/>
    <property type="resolution" value="4.40 A"/>
    <property type="chains" value="d=1-351"/>
</dbReference>
<dbReference type="PDB" id="9BRT">
    <property type="method" value="EM"/>
    <property type="resolution" value="4.30 A"/>
    <property type="chains" value="d=1-351"/>
</dbReference>
<dbReference type="PDB" id="9BRU">
    <property type="method" value="EM"/>
    <property type="resolution" value="4.40 A"/>
    <property type="chains" value="d=1-351"/>
</dbReference>
<dbReference type="PDB" id="9BRY">
    <property type="method" value="EM"/>
    <property type="resolution" value="3.60 A"/>
    <property type="chains" value="d=1-351"/>
</dbReference>
<dbReference type="PDB" id="9BRZ">
    <property type="method" value="EM"/>
    <property type="resolution" value="3.80 A"/>
    <property type="chains" value="d=1-351"/>
</dbReference>
<dbReference type="PDBsum" id="9BRA"/>
<dbReference type="PDBsum" id="9BRQ"/>
<dbReference type="PDBsum" id="9BRR"/>
<dbReference type="PDBsum" id="9BRS"/>
<dbReference type="PDBsum" id="9BRT"/>
<dbReference type="PDBsum" id="9BRU"/>
<dbReference type="PDBsum" id="9BRY"/>
<dbReference type="PDBsum" id="9BRZ"/>
<dbReference type="EMDB" id="EMD-44839"/>
<dbReference type="EMDB" id="EMD-44840"/>
<dbReference type="EMDB" id="EMD-44841"/>
<dbReference type="EMDB" id="EMD-44842"/>
<dbReference type="EMDB" id="EMD-44843"/>
<dbReference type="EMDB" id="EMD-44844"/>
<dbReference type="EMDB" id="EMD-44845"/>
<dbReference type="EMDB" id="EMD-44846"/>
<dbReference type="SMR" id="P51863"/>
<dbReference type="BioGRID" id="198264">
    <property type="interactions" value="17"/>
</dbReference>
<dbReference type="FunCoup" id="P51863">
    <property type="interactions" value="2743"/>
</dbReference>
<dbReference type="IntAct" id="P51863">
    <property type="interactions" value="10"/>
</dbReference>
<dbReference type="MINT" id="P51863"/>
<dbReference type="STRING" id="10090.ENSMUSP00000013304"/>
<dbReference type="TCDB" id="3.A.2.2.6">
    <property type="family name" value="the h+- or na+-translocating f-type, v-type and a-type atpase (f-atpase) superfamily"/>
</dbReference>
<dbReference type="GlyGen" id="P51863">
    <property type="glycosylation" value="1 site, 1 O-linked glycan (1 site)"/>
</dbReference>
<dbReference type="iPTMnet" id="P51863"/>
<dbReference type="PhosphoSitePlus" id="P51863"/>
<dbReference type="SwissPalm" id="P51863"/>
<dbReference type="jPOST" id="P51863"/>
<dbReference type="PaxDb" id="10090-ENSMUSP00000013304"/>
<dbReference type="PeptideAtlas" id="P51863"/>
<dbReference type="ProteomicsDB" id="297905"/>
<dbReference type="Pumba" id="P51863"/>
<dbReference type="Antibodypedia" id="2185">
    <property type="antibodies" value="201 antibodies from 26 providers"/>
</dbReference>
<dbReference type="DNASU" id="11972"/>
<dbReference type="Ensembl" id="ENSMUST00000013304.8">
    <property type="protein sequence ID" value="ENSMUSP00000013304.7"/>
    <property type="gene ID" value="ENSMUSG00000013160.8"/>
</dbReference>
<dbReference type="GeneID" id="11972"/>
<dbReference type="KEGG" id="mmu:11972"/>
<dbReference type="UCSC" id="uc009ndg.1">
    <property type="organism name" value="mouse"/>
</dbReference>
<dbReference type="AGR" id="MGI:1201778"/>
<dbReference type="CTD" id="9114"/>
<dbReference type="MGI" id="MGI:1201778">
    <property type="gene designation" value="Atp6v0d1"/>
</dbReference>
<dbReference type="VEuPathDB" id="HostDB:ENSMUSG00000013160"/>
<dbReference type="eggNOG" id="KOG2957">
    <property type="taxonomic scope" value="Eukaryota"/>
</dbReference>
<dbReference type="GeneTree" id="ENSGT00390000002200"/>
<dbReference type="HOGENOM" id="CLU_051277_0_0_1"/>
<dbReference type="InParanoid" id="P51863"/>
<dbReference type="OMA" id="MTYGYMI"/>
<dbReference type="OrthoDB" id="10250083at2759"/>
<dbReference type="PhylomeDB" id="P51863"/>
<dbReference type="TreeFam" id="TF300857"/>
<dbReference type="Reactome" id="R-MMU-1222556">
    <property type="pathway name" value="ROS and RNS production in phagocytes"/>
</dbReference>
<dbReference type="Reactome" id="R-MMU-77387">
    <property type="pathway name" value="Insulin receptor recycling"/>
</dbReference>
<dbReference type="Reactome" id="R-MMU-917977">
    <property type="pathway name" value="Transferrin endocytosis and recycling"/>
</dbReference>
<dbReference type="Reactome" id="R-MMU-9639288">
    <property type="pathway name" value="Amino acids regulate mTORC1"/>
</dbReference>
<dbReference type="Reactome" id="R-MMU-983712">
    <property type="pathway name" value="Ion channel transport"/>
</dbReference>
<dbReference type="SABIO-RK" id="P51863"/>
<dbReference type="BioGRID-ORCS" id="11972">
    <property type="hits" value="27 hits in 80 CRISPR screens"/>
</dbReference>
<dbReference type="CD-CODE" id="CE726F99">
    <property type="entry name" value="Postsynaptic density"/>
</dbReference>
<dbReference type="ChiTaRS" id="Atp6v0d1">
    <property type="organism name" value="mouse"/>
</dbReference>
<dbReference type="PRO" id="PR:P51863"/>
<dbReference type="Proteomes" id="UP000000589">
    <property type="component" value="Chromosome 8"/>
</dbReference>
<dbReference type="RNAct" id="P51863">
    <property type="molecule type" value="protein"/>
</dbReference>
<dbReference type="Bgee" id="ENSMUSG00000013160">
    <property type="expression patterns" value="Expressed in facial nucleus and 272 other cell types or tissues"/>
</dbReference>
<dbReference type="GO" id="GO:0016324">
    <property type="term" value="C:apical plasma membrane"/>
    <property type="evidence" value="ECO:0007669"/>
    <property type="project" value="Ensembl"/>
</dbReference>
<dbReference type="GO" id="GO:0043679">
    <property type="term" value="C:axon terminus"/>
    <property type="evidence" value="ECO:0007669"/>
    <property type="project" value="Ensembl"/>
</dbReference>
<dbReference type="GO" id="GO:0005813">
    <property type="term" value="C:centrosome"/>
    <property type="evidence" value="ECO:0007669"/>
    <property type="project" value="Ensembl"/>
</dbReference>
<dbReference type="GO" id="GO:0030665">
    <property type="term" value="C:clathrin-coated vesicle membrane"/>
    <property type="evidence" value="ECO:0007669"/>
    <property type="project" value="UniProtKB-SubCell"/>
</dbReference>
<dbReference type="GO" id="GO:0005769">
    <property type="term" value="C:early endosome"/>
    <property type="evidence" value="ECO:0000314"/>
    <property type="project" value="MGI"/>
</dbReference>
<dbReference type="GO" id="GO:0005765">
    <property type="term" value="C:lysosomal membrane"/>
    <property type="evidence" value="ECO:0007669"/>
    <property type="project" value="UniProtKB-SubCell"/>
</dbReference>
<dbReference type="GO" id="GO:0033176">
    <property type="term" value="C:proton-transporting V-type ATPase complex"/>
    <property type="evidence" value="ECO:0000314"/>
    <property type="project" value="MGI"/>
</dbReference>
<dbReference type="GO" id="GO:0033179">
    <property type="term" value="C:proton-transporting V-type ATPase, V0 domain"/>
    <property type="evidence" value="ECO:0000314"/>
    <property type="project" value="MGI"/>
</dbReference>
<dbReference type="GO" id="GO:0030672">
    <property type="term" value="C:synaptic vesicle membrane"/>
    <property type="evidence" value="ECO:0007669"/>
    <property type="project" value="Ensembl"/>
</dbReference>
<dbReference type="GO" id="GO:0000220">
    <property type="term" value="C:vacuolar proton-transporting V-type ATPase, V0 domain"/>
    <property type="evidence" value="ECO:0000250"/>
    <property type="project" value="UniProtKB"/>
</dbReference>
<dbReference type="GO" id="GO:0044877">
    <property type="term" value="F:protein-containing complex binding"/>
    <property type="evidence" value="ECO:0007669"/>
    <property type="project" value="Ensembl"/>
</dbReference>
<dbReference type="GO" id="GO:0046961">
    <property type="term" value="F:proton-transporting ATPase activity, rotational mechanism"/>
    <property type="evidence" value="ECO:0007669"/>
    <property type="project" value="InterPro"/>
</dbReference>
<dbReference type="GO" id="GO:0036295">
    <property type="term" value="P:cellular response to increased oxygen levels"/>
    <property type="evidence" value="ECO:0000250"/>
    <property type="project" value="UniProtKB"/>
</dbReference>
<dbReference type="GO" id="GO:0060271">
    <property type="term" value="P:cilium assembly"/>
    <property type="evidence" value="ECO:0000250"/>
    <property type="project" value="UniProtKB"/>
</dbReference>
<dbReference type="GO" id="GO:0006879">
    <property type="term" value="P:intracellular iron ion homeostasis"/>
    <property type="evidence" value="ECO:0000250"/>
    <property type="project" value="UniProtKB"/>
</dbReference>
<dbReference type="GO" id="GO:0097401">
    <property type="term" value="P:synaptic vesicle lumen acidification"/>
    <property type="evidence" value="ECO:0000314"/>
    <property type="project" value="SynGO"/>
</dbReference>
<dbReference type="FunFam" id="1.10.132.50:FF:000002">
    <property type="entry name" value="V-type proton ATPase subunit"/>
    <property type="match status" value="1"/>
</dbReference>
<dbReference type="FunFam" id="1.20.1690.10:FF:000001">
    <property type="entry name" value="V-type proton ATPase subunit"/>
    <property type="match status" value="1"/>
</dbReference>
<dbReference type="FunFam" id="1.20.1690.10:FF:000002">
    <property type="entry name" value="V-type proton ATPase subunit"/>
    <property type="match status" value="1"/>
</dbReference>
<dbReference type="Gene3D" id="1.10.132.50">
    <property type="entry name" value="ATP synthase (C/AC39) subunit, domain 3"/>
    <property type="match status" value="1"/>
</dbReference>
<dbReference type="Gene3D" id="1.20.1690.10">
    <property type="entry name" value="V-type ATP synthase subunit C domain"/>
    <property type="match status" value="2"/>
</dbReference>
<dbReference type="InterPro" id="IPR036079">
    <property type="entry name" value="ATPase_csu/dsu_sf"/>
</dbReference>
<dbReference type="InterPro" id="IPR002843">
    <property type="entry name" value="ATPase_V0-cplx_csu/dsu"/>
</dbReference>
<dbReference type="InterPro" id="IPR016727">
    <property type="entry name" value="ATPase_V0-cplx_dsu"/>
</dbReference>
<dbReference type="InterPro" id="IPR035067">
    <property type="entry name" value="V-type_ATPase_csu/dsu"/>
</dbReference>
<dbReference type="InterPro" id="IPR044911">
    <property type="entry name" value="V-type_ATPase_csu/dsu_dom_3"/>
</dbReference>
<dbReference type="PANTHER" id="PTHR11028">
    <property type="entry name" value="VACUOLAR ATP SYNTHASE SUBUNIT AC39"/>
    <property type="match status" value="1"/>
</dbReference>
<dbReference type="Pfam" id="PF01992">
    <property type="entry name" value="vATP-synt_AC39"/>
    <property type="match status" value="1"/>
</dbReference>
<dbReference type="PIRSF" id="PIRSF018497">
    <property type="entry name" value="V-ATP_synth_D"/>
    <property type="match status" value="1"/>
</dbReference>
<dbReference type="SUPFAM" id="SSF103486">
    <property type="entry name" value="V-type ATP synthase subunit C"/>
    <property type="match status" value="1"/>
</dbReference>
<sequence>MSFFPELYFNVDNGYLEGLVRGLKAGVLSQADYLNLVQCETLEDLKLHLQSTDYGNFLANEASPLTVSVIDDKLKEKMVVEFRHMRNHAYEPLASFLDFITYSYMIDNVILLITGTLHQRSIAELVPKCHPLGSFEQMEAVNIAQTPAELYNAILVDTPLAAFFQDCISEQDLDEMNIEIIRNTLYKAYLESFYKFCTLLGGTTADAMCPILEFEADRRAFIITINSFGTELSKEDRAKLFPHCGRLYPEGLAQLARADDYEQVKNVADYYPEYKLLFEGAGSNPGDKTLEDRFFEHEVKLNKLAFLNQFHFGVFYAFVKLKEQECRNIVWIAECIAQRHRAKIDNYIPIF</sequence>
<accession>P51863</accession>
<accession>Q54A57</accession>
<accession>Q9QWJ2</accession>
<proteinExistence type="evidence at protein level"/>
<organism>
    <name type="scientific">Mus musculus</name>
    <name type="common">Mouse</name>
    <dbReference type="NCBI Taxonomy" id="10090"/>
    <lineage>
        <taxon>Eukaryota</taxon>
        <taxon>Metazoa</taxon>
        <taxon>Chordata</taxon>
        <taxon>Craniata</taxon>
        <taxon>Vertebrata</taxon>
        <taxon>Euteleostomi</taxon>
        <taxon>Mammalia</taxon>
        <taxon>Eutheria</taxon>
        <taxon>Euarchontoglires</taxon>
        <taxon>Glires</taxon>
        <taxon>Rodentia</taxon>
        <taxon>Myomorpha</taxon>
        <taxon>Muroidea</taxon>
        <taxon>Muridae</taxon>
        <taxon>Murinae</taxon>
        <taxon>Mus</taxon>
        <taxon>Mus</taxon>
    </lineage>
</organism>
<comment type="function">
    <text evidence="2 3 5">Subunit of the V0 complex of vacuolar(H+)-ATPase (V-ATPase), a multisubunit enzyme composed of a peripheral complex (V1) that hydrolyzes ATP and a membrane integral complex (V0) that translocates protons (PubMed:12963731). V-ATPase is responsible for acidifying a variety of intracellular compartments in eukaryotic cells, thus providing most of the energy required for transport processes in the vacuolar system (By similarity). May play a role in coupling of proton transport and ATP hydrolysis (PubMed:12963731). In aerobic conditions, involved in intracellular iron homeostasis, thus triggering the activity of Fe(2+) prolyl hydroxylase (PHD) enzymes, and leading to HIF1A hydroxylation and subsequent proteasomal degradation (By similarity). May play a role in cilium biogenesis through regulation of the transport and the localization of proteins to the cilium (By similarity).</text>
</comment>
<comment type="subunit">
    <text evidence="2 6">V-ATPase is a heteromultimeric enzyme made up of two complexes: the ATP-hydrolytic V1 complex and the proton translocation V0 complex (By similarity). The V1 complex consists of three catalytic AB heterodimers that form a heterohexamer, three peripheral stalks each consisting of EG heterodimers, one central rotor including subunits D and F, and the regulatory subunits C and H (By similarity). The proton translocation complex V0 consists of the proton transport subunit a, a ring of proteolipid subunits c9c'', rotary subunit d, subunits e and f, and the accessory subunits ATP6AP1/Ac45 and ATP6AP2/PRR (By similarity). Interacts with ATP6AP2; ATP6AP2 is a V-ATPase accessory protein and the interaction promotes v-ATPase complex assembly (By similarity). Interacts with TMEM9; TMEM9 is a v-ATPase assembly regulator and the interaction induces the interaction with ATP6AP2 (By similarity). Interacts with PIP4P1 (PubMed:29644770).</text>
</comment>
<comment type="subcellular location">
    <subcellularLocation>
        <location evidence="2">Membrane</location>
        <topology evidence="2">Peripheral membrane protein</topology>
        <orientation evidence="2">Cytoplasmic side</orientation>
    </subcellularLocation>
    <subcellularLocation>
        <location evidence="2">Lysosome membrane</location>
        <topology evidence="7">Peripheral membrane protein</topology>
    </subcellularLocation>
    <subcellularLocation>
        <location evidence="1">Cytoplasmic vesicle</location>
        <location evidence="1">Clathrin-coated vesicle membrane</location>
        <topology evidence="7">Peripheral membrane protein</topology>
    </subcellularLocation>
    <text evidence="3">Localizes to centrosome and the base of the cilium.</text>
</comment>
<comment type="tissue specificity">
    <text evidence="4 5">Ubiquitous.</text>
</comment>
<comment type="developmental stage">
    <text evidence="5">Expressed throughout early development.</text>
</comment>
<comment type="similarity">
    <text evidence="7">Belongs to the V-ATPase V0D/AC39 subunit family.</text>
</comment>
<reference key="1">
    <citation type="submission" date="1994-08" db="EMBL/GenBank/DDBJ databases">
        <title>cDNA sequences for mouse vacuolar ATPase subunits.</title>
        <authorList>
            <person name="Howell M.L."/>
            <person name="Dean G.E."/>
        </authorList>
    </citation>
    <scope>NUCLEOTIDE SEQUENCE [MRNA]</scope>
</reference>
<reference key="2">
    <citation type="journal article" date="1998" name="Eur. J. Neurosci.">
        <title>Brain Ac39/physophilin: cloning, coexpression and colocalization with synaptophysin.</title>
        <authorList>
            <person name="Carrion-Vazquez M."/>
            <person name="Fernandez A.M."/>
            <person name="Chowen J."/>
            <person name="Nieto-Sampedro M."/>
        </authorList>
    </citation>
    <scope>NUCLEOTIDE SEQUENCE [MRNA]</scope>
    <source>
        <strain>BALB/cJ</strain>
        <tissue>Brain</tissue>
    </source>
</reference>
<reference key="3">
    <citation type="journal article" date="2003" name="Gene">
        <title>Diversity of mouse proton-translocating ATPase: presence of multiple isoforms of the C, d and G subunits.</title>
        <authorList>
            <person name="Sun-Wada G.-H."/>
            <person name="Yoshimizu T."/>
            <person name="Imai-Senga Y."/>
            <person name="Wada Y."/>
            <person name="Futai M."/>
        </authorList>
    </citation>
    <scope>NUCLEOTIDE SEQUENCE [MRNA]</scope>
    <scope>TISSUE SPECIFICITY</scope>
</reference>
<reference key="4">
    <citation type="journal article" date="2005" name="Science">
        <title>The transcriptional landscape of the mammalian genome.</title>
        <authorList>
            <person name="Carninci P."/>
            <person name="Kasukawa T."/>
            <person name="Katayama S."/>
            <person name="Gough J."/>
            <person name="Frith M.C."/>
            <person name="Maeda N."/>
            <person name="Oyama R."/>
            <person name="Ravasi T."/>
            <person name="Lenhard B."/>
            <person name="Wells C."/>
            <person name="Kodzius R."/>
            <person name="Shimokawa K."/>
            <person name="Bajic V.B."/>
            <person name="Brenner S.E."/>
            <person name="Batalov S."/>
            <person name="Forrest A.R."/>
            <person name="Zavolan M."/>
            <person name="Davis M.J."/>
            <person name="Wilming L.G."/>
            <person name="Aidinis V."/>
            <person name="Allen J.E."/>
            <person name="Ambesi-Impiombato A."/>
            <person name="Apweiler R."/>
            <person name="Aturaliya R.N."/>
            <person name="Bailey T.L."/>
            <person name="Bansal M."/>
            <person name="Baxter L."/>
            <person name="Beisel K.W."/>
            <person name="Bersano T."/>
            <person name="Bono H."/>
            <person name="Chalk A.M."/>
            <person name="Chiu K.P."/>
            <person name="Choudhary V."/>
            <person name="Christoffels A."/>
            <person name="Clutterbuck D.R."/>
            <person name="Crowe M.L."/>
            <person name="Dalla E."/>
            <person name="Dalrymple B.P."/>
            <person name="de Bono B."/>
            <person name="Della Gatta G."/>
            <person name="di Bernardo D."/>
            <person name="Down T."/>
            <person name="Engstrom P."/>
            <person name="Fagiolini M."/>
            <person name="Faulkner G."/>
            <person name="Fletcher C.F."/>
            <person name="Fukushima T."/>
            <person name="Furuno M."/>
            <person name="Futaki S."/>
            <person name="Gariboldi M."/>
            <person name="Georgii-Hemming P."/>
            <person name="Gingeras T.R."/>
            <person name="Gojobori T."/>
            <person name="Green R.E."/>
            <person name="Gustincich S."/>
            <person name="Harbers M."/>
            <person name="Hayashi Y."/>
            <person name="Hensch T.K."/>
            <person name="Hirokawa N."/>
            <person name="Hill D."/>
            <person name="Huminiecki L."/>
            <person name="Iacono M."/>
            <person name="Ikeo K."/>
            <person name="Iwama A."/>
            <person name="Ishikawa T."/>
            <person name="Jakt M."/>
            <person name="Kanapin A."/>
            <person name="Katoh M."/>
            <person name="Kawasawa Y."/>
            <person name="Kelso J."/>
            <person name="Kitamura H."/>
            <person name="Kitano H."/>
            <person name="Kollias G."/>
            <person name="Krishnan S.P."/>
            <person name="Kruger A."/>
            <person name="Kummerfeld S.K."/>
            <person name="Kurochkin I.V."/>
            <person name="Lareau L.F."/>
            <person name="Lazarevic D."/>
            <person name="Lipovich L."/>
            <person name="Liu J."/>
            <person name="Liuni S."/>
            <person name="McWilliam S."/>
            <person name="Madan Babu M."/>
            <person name="Madera M."/>
            <person name="Marchionni L."/>
            <person name="Matsuda H."/>
            <person name="Matsuzawa S."/>
            <person name="Miki H."/>
            <person name="Mignone F."/>
            <person name="Miyake S."/>
            <person name="Morris K."/>
            <person name="Mottagui-Tabar S."/>
            <person name="Mulder N."/>
            <person name="Nakano N."/>
            <person name="Nakauchi H."/>
            <person name="Ng P."/>
            <person name="Nilsson R."/>
            <person name="Nishiguchi S."/>
            <person name="Nishikawa S."/>
            <person name="Nori F."/>
            <person name="Ohara O."/>
            <person name="Okazaki Y."/>
            <person name="Orlando V."/>
            <person name="Pang K.C."/>
            <person name="Pavan W.J."/>
            <person name="Pavesi G."/>
            <person name="Pesole G."/>
            <person name="Petrovsky N."/>
            <person name="Piazza S."/>
            <person name="Reed J."/>
            <person name="Reid J.F."/>
            <person name="Ring B.Z."/>
            <person name="Ringwald M."/>
            <person name="Rost B."/>
            <person name="Ruan Y."/>
            <person name="Salzberg S.L."/>
            <person name="Sandelin A."/>
            <person name="Schneider C."/>
            <person name="Schoenbach C."/>
            <person name="Sekiguchi K."/>
            <person name="Semple C.A."/>
            <person name="Seno S."/>
            <person name="Sessa L."/>
            <person name="Sheng Y."/>
            <person name="Shibata Y."/>
            <person name="Shimada H."/>
            <person name="Shimada K."/>
            <person name="Silva D."/>
            <person name="Sinclair B."/>
            <person name="Sperling S."/>
            <person name="Stupka E."/>
            <person name="Sugiura K."/>
            <person name="Sultana R."/>
            <person name="Takenaka Y."/>
            <person name="Taki K."/>
            <person name="Tammoja K."/>
            <person name="Tan S.L."/>
            <person name="Tang S."/>
            <person name="Taylor M.S."/>
            <person name="Tegner J."/>
            <person name="Teichmann S.A."/>
            <person name="Ueda H.R."/>
            <person name="van Nimwegen E."/>
            <person name="Verardo R."/>
            <person name="Wei C.L."/>
            <person name="Yagi K."/>
            <person name="Yamanishi H."/>
            <person name="Zabarovsky E."/>
            <person name="Zhu S."/>
            <person name="Zimmer A."/>
            <person name="Hide W."/>
            <person name="Bult C."/>
            <person name="Grimmond S.M."/>
            <person name="Teasdale R.D."/>
            <person name="Liu E.T."/>
            <person name="Brusic V."/>
            <person name="Quackenbush J."/>
            <person name="Wahlestedt C."/>
            <person name="Mattick J.S."/>
            <person name="Hume D.A."/>
            <person name="Kai C."/>
            <person name="Sasaki D."/>
            <person name="Tomaru Y."/>
            <person name="Fukuda S."/>
            <person name="Kanamori-Katayama M."/>
            <person name="Suzuki M."/>
            <person name="Aoki J."/>
            <person name="Arakawa T."/>
            <person name="Iida J."/>
            <person name="Imamura K."/>
            <person name="Itoh M."/>
            <person name="Kato T."/>
            <person name="Kawaji H."/>
            <person name="Kawagashira N."/>
            <person name="Kawashima T."/>
            <person name="Kojima M."/>
            <person name="Kondo S."/>
            <person name="Konno H."/>
            <person name="Nakano K."/>
            <person name="Ninomiya N."/>
            <person name="Nishio T."/>
            <person name="Okada M."/>
            <person name="Plessy C."/>
            <person name="Shibata K."/>
            <person name="Shiraki T."/>
            <person name="Suzuki S."/>
            <person name="Tagami M."/>
            <person name="Waki K."/>
            <person name="Watahiki A."/>
            <person name="Okamura-Oho Y."/>
            <person name="Suzuki H."/>
            <person name="Kawai J."/>
            <person name="Hayashizaki Y."/>
        </authorList>
    </citation>
    <scope>NUCLEOTIDE SEQUENCE [LARGE SCALE MRNA]</scope>
    <source>
        <strain>C57BL/6J</strain>
        <tissue>Thymus</tissue>
    </source>
</reference>
<reference key="5">
    <citation type="submission" date="2007-04" db="UniProtKB">
        <authorList>
            <person name="Lubec G."/>
            <person name="Kang S.U."/>
        </authorList>
    </citation>
    <scope>PROTEIN SEQUENCE OF 25-73; 87-128; 188-237; 240-288; 294-300; 304-320; 328-339 AND 344-351</scope>
    <scope>IDENTIFICATION BY MASS SPECTROMETRY</scope>
    <source>
        <strain>C57BL/6J</strain>
        <tissue>Brain</tissue>
    </source>
</reference>
<reference key="6">
    <citation type="journal article" date="2003" name="J. Biol. Chem.">
        <title>Expression and function of the mouse V-ATPase d subunit isoforms.</title>
        <authorList>
            <person name="Nishi T."/>
            <person name="Kawasaki-Nishi S."/>
            <person name="Forgac M."/>
        </authorList>
    </citation>
    <scope>FUNCTION</scope>
    <scope>TISSUE SPECIFICITY</scope>
    <scope>DEVELOPMENTAL STAGE</scope>
</reference>
<reference key="7">
    <citation type="journal article" date="2008" name="J. Proteome Res.">
        <title>Large-scale identification and evolution indexing of tyrosine phosphorylation sites from murine brain.</title>
        <authorList>
            <person name="Ballif B.A."/>
            <person name="Carey G.R."/>
            <person name="Sunyaev S.R."/>
            <person name="Gygi S.P."/>
        </authorList>
    </citation>
    <scope>PHOSPHORYLATION [LARGE SCALE ANALYSIS] AT TYR-270</scope>
    <scope>IDENTIFICATION BY MASS SPECTROMETRY [LARGE SCALE ANALYSIS]</scope>
    <source>
        <tissue>Brain</tissue>
    </source>
</reference>
<reference key="8">
    <citation type="journal article" date="2010" name="Cell">
        <title>A tissue-specific atlas of mouse protein phosphorylation and expression.</title>
        <authorList>
            <person name="Huttlin E.L."/>
            <person name="Jedrychowski M.P."/>
            <person name="Elias J.E."/>
            <person name="Goswami T."/>
            <person name="Rad R."/>
            <person name="Beausoleil S.A."/>
            <person name="Villen J."/>
            <person name="Haas W."/>
            <person name="Sowa M.E."/>
            <person name="Gygi S.P."/>
        </authorList>
    </citation>
    <scope>PHOSPHORYLATION [LARGE SCALE ANALYSIS] AT SER-283</scope>
    <scope>IDENTIFICATION BY MASS SPECTROMETRY [LARGE SCALE ANALYSIS]</scope>
    <source>
        <tissue>Brain</tissue>
        <tissue>Brown adipose tissue</tissue>
        <tissue>Heart</tissue>
        <tissue>Kidney</tissue>
        <tissue>Liver</tissue>
        <tissue>Lung</tissue>
        <tissue>Pancreas</tissue>
        <tissue>Spleen</tissue>
        <tissue>Testis</tissue>
    </source>
</reference>
<reference key="9">
    <citation type="journal article" date="2018" name="Genes Cells">
        <title>TMEM55B contributes to lysosomal homeostasis and amino acid-induced mTORC1 activation.</title>
        <authorList>
            <person name="Hashimoto Y."/>
            <person name="Shirane M."/>
            <person name="Nakayama K.I."/>
        </authorList>
    </citation>
    <scope>INTERACTION WITH PIP4P1</scope>
</reference>
<gene>
    <name evidence="8" type="primary">Atp6v0d1</name>
    <name type="synonym">Atp6d</name>
</gene>